<sequence>MTHPNELPLSPLSALQFYATAPYPCSYLEGRVARSQVATPSHLINSDVYTELVRAGFRRSGVFTYRPYCDGCRACVPVRVPVERFTPNRTQRRVWKKHGGLIATVAPLHYDEEHYALYMRYQSARHAGGGMDRDSRDQYEQFLLQSRINSRLVEFREPPNPGYAGHPDMPGTLRMVSMIDILGDGLSSVYTFFDPDQPHTSYGTYNILWQIEQARSLKLPHVYLGYWIRESPKMAYKANFTPLEGLFDGTWKVLDPAAPDLSPVDAAKGGSRGLRIDRG</sequence>
<gene>
    <name evidence="1" type="primary">bpt</name>
    <name type="ordered locus">Bphy_1663</name>
</gene>
<keyword id="KW-0012">Acyltransferase</keyword>
<keyword id="KW-0963">Cytoplasm</keyword>
<keyword id="KW-1185">Reference proteome</keyword>
<keyword id="KW-0808">Transferase</keyword>
<dbReference type="EC" id="2.3.2.29" evidence="1"/>
<dbReference type="EMBL" id="CP001043">
    <property type="protein sequence ID" value="ACC70845.1"/>
    <property type="molecule type" value="Genomic_DNA"/>
</dbReference>
<dbReference type="RefSeq" id="WP_012401055.1">
    <property type="nucleotide sequence ID" value="NC_010622.1"/>
</dbReference>
<dbReference type="SMR" id="B2JKL8"/>
<dbReference type="STRING" id="391038.Bphy_1663"/>
<dbReference type="KEGG" id="bph:Bphy_1663"/>
<dbReference type="eggNOG" id="COG2935">
    <property type="taxonomic scope" value="Bacteria"/>
</dbReference>
<dbReference type="HOGENOM" id="CLU_077607_0_0_4"/>
<dbReference type="OrthoDB" id="9782022at2"/>
<dbReference type="Proteomes" id="UP000001192">
    <property type="component" value="Chromosome 1"/>
</dbReference>
<dbReference type="GO" id="GO:0005737">
    <property type="term" value="C:cytoplasm"/>
    <property type="evidence" value="ECO:0007669"/>
    <property type="project" value="UniProtKB-SubCell"/>
</dbReference>
<dbReference type="GO" id="GO:0004057">
    <property type="term" value="F:arginyl-tRNA--protein transferase activity"/>
    <property type="evidence" value="ECO:0007669"/>
    <property type="project" value="InterPro"/>
</dbReference>
<dbReference type="GO" id="GO:0008914">
    <property type="term" value="F:leucyl-tRNA--protein transferase activity"/>
    <property type="evidence" value="ECO:0007669"/>
    <property type="project" value="UniProtKB-UniRule"/>
</dbReference>
<dbReference type="GO" id="GO:0071596">
    <property type="term" value="P:ubiquitin-dependent protein catabolic process via the N-end rule pathway"/>
    <property type="evidence" value="ECO:0007669"/>
    <property type="project" value="InterPro"/>
</dbReference>
<dbReference type="HAMAP" id="MF_00689">
    <property type="entry name" value="Bpt"/>
    <property type="match status" value="1"/>
</dbReference>
<dbReference type="InterPro" id="IPR016181">
    <property type="entry name" value="Acyl_CoA_acyltransferase"/>
</dbReference>
<dbReference type="InterPro" id="IPR017138">
    <property type="entry name" value="Asp_Glu_LeuTrfase"/>
</dbReference>
<dbReference type="InterPro" id="IPR030700">
    <property type="entry name" value="N-end_Aminoacyl_Trfase"/>
</dbReference>
<dbReference type="InterPro" id="IPR007472">
    <property type="entry name" value="N-end_Aminoacyl_Trfase_C"/>
</dbReference>
<dbReference type="InterPro" id="IPR007471">
    <property type="entry name" value="N-end_Aminoacyl_Trfase_N"/>
</dbReference>
<dbReference type="NCBIfam" id="NF002341">
    <property type="entry name" value="PRK01305.1-1"/>
    <property type="match status" value="1"/>
</dbReference>
<dbReference type="NCBIfam" id="NF002342">
    <property type="entry name" value="PRK01305.1-3"/>
    <property type="match status" value="1"/>
</dbReference>
<dbReference type="NCBIfam" id="NF002346">
    <property type="entry name" value="PRK01305.2-3"/>
    <property type="match status" value="1"/>
</dbReference>
<dbReference type="PANTHER" id="PTHR21367">
    <property type="entry name" value="ARGININE-TRNA-PROTEIN TRANSFERASE 1"/>
    <property type="match status" value="1"/>
</dbReference>
<dbReference type="PANTHER" id="PTHR21367:SF1">
    <property type="entry name" value="ARGINYL-TRNA--PROTEIN TRANSFERASE 1"/>
    <property type="match status" value="1"/>
</dbReference>
<dbReference type="Pfam" id="PF04377">
    <property type="entry name" value="ATE_C"/>
    <property type="match status" value="1"/>
</dbReference>
<dbReference type="Pfam" id="PF04376">
    <property type="entry name" value="ATE_N"/>
    <property type="match status" value="1"/>
</dbReference>
<dbReference type="PIRSF" id="PIRSF037208">
    <property type="entry name" value="ATE_pro_prd"/>
    <property type="match status" value="1"/>
</dbReference>
<dbReference type="SUPFAM" id="SSF55729">
    <property type="entry name" value="Acyl-CoA N-acyltransferases (Nat)"/>
    <property type="match status" value="1"/>
</dbReference>
<proteinExistence type="inferred from homology"/>
<organism>
    <name type="scientific">Paraburkholderia phymatum (strain DSM 17167 / CIP 108236 / LMG 21445 / STM815)</name>
    <name type="common">Burkholderia phymatum</name>
    <dbReference type="NCBI Taxonomy" id="391038"/>
    <lineage>
        <taxon>Bacteria</taxon>
        <taxon>Pseudomonadati</taxon>
        <taxon>Pseudomonadota</taxon>
        <taxon>Betaproteobacteria</taxon>
        <taxon>Burkholderiales</taxon>
        <taxon>Burkholderiaceae</taxon>
        <taxon>Paraburkholderia</taxon>
    </lineage>
</organism>
<comment type="function">
    <text evidence="1">Functions in the N-end rule pathway of protein degradation where it conjugates Leu from its aminoacyl-tRNA to the N-termini of proteins containing an N-terminal aspartate or glutamate.</text>
</comment>
<comment type="catalytic activity">
    <reaction evidence="1">
        <text>N-terminal L-glutamyl-[protein] + L-leucyl-tRNA(Leu) = N-terminal L-leucyl-L-glutamyl-[protein] + tRNA(Leu) + H(+)</text>
        <dbReference type="Rhea" id="RHEA:50412"/>
        <dbReference type="Rhea" id="RHEA-COMP:9613"/>
        <dbReference type="Rhea" id="RHEA-COMP:9622"/>
        <dbReference type="Rhea" id="RHEA-COMP:12664"/>
        <dbReference type="Rhea" id="RHEA-COMP:12668"/>
        <dbReference type="ChEBI" id="CHEBI:15378"/>
        <dbReference type="ChEBI" id="CHEBI:64721"/>
        <dbReference type="ChEBI" id="CHEBI:78442"/>
        <dbReference type="ChEBI" id="CHEBI:78494"/>
        <dbReference type="ChEBI" id="CHEBI:133041"/>
        <dbReference type="EC" id="2.3.2.29"/>
    </reaction>
</comment>
<comment type="catalytic activity">
    <reaction evidence="1">
        <text>N-terminal L-aspartyl-[protein] + L-leucyl-tRNA(Leu) = N-terminal L-leucyl-L-aspartyl-[protein] + tRNA(Leu) + H(+)</text>
        <dbReference type="Rhea" id="RHEA:50420"/>
        <dbReference type="Rhea" id="RHEA-COMP:9613"/>
        <dbReference type="Rhea" id="RHEA-COMP:9622"/>
        <dbReference type="Rhea" id="RHEA-COMP:12669"/>
        <dbReference type="Rhea" id="RHEA-COMP:12674"/>
        <dbReference type="ChEBI" id="CHEBI:15378"/>
        <dbReference type="ChEBI" id="CHEBI:64720"/>
        <dbReference type="ChEBI" id="CHEBI:78442"/>
        <dbReference type="ChEBI" id="CHEBI:78494"/>
        <dbReference type="ChEBI" id="CHEBI:133042"/>
        <dbReference type="EC" id="2.3.2.29"/>
    </reaction>
</comment>
<comment type="subcellular location">
    <subcellularLocation>
        <location evidence="1">Cytoplasm</location>
    </subcellularLocation>
</comment>
<comment type="similarity">
    <text evidence="1">Belongs to the R-transferase family. Bpt subfamily.</text>
</comment>
<accession>B2JKL8</accession>
<name>BPT_PARP8</name>
<feature type="chain" id="PRO_1000131976" description="Aspartate/glutamate leucyltransferase">
    <location>
        <begin position="1"/>
        <end position="279"/>
    </location>
</feature>
<protein>
    <recommendedName>
        <fullName evidence="1">Aspartate/glutamate leucyltransferase</fullName>
        <ecNumber evidence="1">2.3.2.29</ecNumber>
    </recommendedName>
</protein>
<reference key="1">
    <citation type="journal article" date="2014" name="Stand. Genomic Sci.">
        <title>Complete genome sequence of Burkholderia phymatum STM815(T), a broad host range and efficient nitrogen-fixing symbiont of Mimosa species.</title>
        <authorList>
            <person name="Moulin L."/>
            <person name="Klonowska A."/>
            <person name="Caroline B."/>
            <person name="Booth K."/>
            <person name="Vriezen J.A."/>
            <person name="Melkonian R."/>
            <person name="James E.K."/>
            <person name="Young J.P."/>
            <person name="Bena G."/>
            <person name="Hauser L."/>
            <person name="Land M."/>
            <person name="Kyrpides N."/>
            <person name="Bruce D."/>
            <person name="Chain P."/>
            <person name="Copeland A."/>
            <person name="Pitluck S."/>
            <person name="Woyke T."/>
            <person name="Lizotte-Waniewski M."/>
            <person name="Bristow J."/>
            <person name="Riley M."/>
        </authorList>
    </citation>
    <scope>NUCLEOTIDE SEQUENCE [LARGE SCALE GENOMIC DNA]</scope>
    <source>
        <strain>DSM 17167 / CIP 108236 / LMG 21445 / STM815</strain>
    </source>
</reference>
<evidence type="ECO:0000255" key="1">
    <source>
        <dbReference type="HAMAP-Rule" id="MF_00689"/>
    </source>
</evidence>